<keyword id="KW-0413">Isomerase</keyword>
<keyword id="KW-0460">Magnesium</keyword>
<keyword id="KW-0479">Metal-binding</keyword>
<keyword id="KW-0597">Phosphoprotein</keyword>
<feature type="chain" id="PRO_0000147907" description="Phosphoglucosamine mutase">
    <location>
        <begin position="1"/>
        <end position="455"/>
    </location>
</feature>
<feature type="active site" description="Phosphoserine intermediate" evidence="1">
    <location>
        <position position="102"/>
    </location>
</feature>
<feature type="binding site" description="via phosphate group" evidence="1">
    <location>
        <position position="102"/>
    </location>
    <ligand>
        <name>Mg(2+)</name>
        <dbReference type="ChEBI" id="CHEBI:18420"/>
    </ligand>
</feature>
<feature type="binding site" evidence="1">
    <location>
        <position position="241"/>
    </location>
    <ligand>
        <name>Mg(2+)</name>
        <dbReference type="ChEBI" id="CHEBI:18420"/>
    </ligand>
</feature>
<feature type="binding site" evidence="1">
    <location>
        <position position="243"/>
    </location>
    <ligand>
        <name>Mg(2+)</name>
        <dbReference type="ChEBI" id="CHEBI:18420"/>
    </ligand>
</feature>
<feature type="binding site" evidence="1">
    <location>
        <position position="245"/>
    </location>
    <ligand>
        <name>Mg(2+)</name>
        <dbReference type="ChEBI" id="CHEBI:18420"/>
    </ligand>
</feature>
<feature type="modified residue" description="Phosphoserine" evidence="1">
    <location>
        <position position="102"/>
    </location>
</feature>
<protein>
    <recommendedName>
        <fullName evidence="1">Phosphoglucosamine mutase</fullName>
        <ecNumber evidence="1">5.4.2.10</ecNumber>
    </recommendedName>
</protein>
<comment type="function">
    <text evidence="1">Catalyzes the conversion of glucosamine-6-phosphate to glucosamine-1-phosphate.</text>
</comment>
<comment type="catalytic activity">
    <reaction evidence="1">
        <text>alpha-D-glucosamine 1-phosphate = D-glucosamine 6-phosphate</text>
        <dbReference type="Rhea" id="RHEA:23424"/>
        <dbReference type="ChEBI" id="CHEBI:58516"/>
        <dbReference type="ChEBI" id="CHEBI:58725"/>
        <dbReference type="EC" id="5.4.2.10"/>
    </reaction>
</comment>
<comment type="cofactor">
    <cofactor evidence="1">
        <name>Mg(2+)</name>
        <dbReference type="ChEBI" id="CHEBI:18420"/>
    </cofactor>
    <text evidence="1">Binds 1 Mg(2+) ion per subunit.</text>
</comment>
<comment type="PTM">
    <text evidence="1">Activated by phosphorylation.</text>
</comment>
<comment type="similarity">
    <text evidence="1">Belongs to the phosphohexose mutase family.</text>
</comment>
<evidence type="ECO:0000255" key="1">
    <source>
        <dbReference type="HAMAP-Rule" id="MF_01554"/>
    </source>
</evidence>
<proteinExistence type="inferred from homology"/>
<accession>Q5X1A3</accession>
<sequence length="455" mass="48344">MSQRKYFGTDGIRGHVGLSNINPEFVLKLGWAVGCVLANGARKKVVIGKDTRVSGYMLESALEAGLSAAGVDVALLGPMPTPGIAYLTQTLRANAGIVISASHNLFEDNGIKFFSADGGKLPDSVELAIEAQLEKQLQTVPSAKLGKATRINDAAGRYIEFCKSTIPSLSRLSNLKIVVDCANGATYHIAPNVFSELGADVVPIGIKPDGFNINQECGSTAPELLREKVIAVGADIGIGLDGDGDRVILVDSLGNLVDGDQIIYIIAKDRHQRGVLHGGVVGTLMSNYGLELAITSLGVPFQRSKVGDRYVLETLREKDWKIGGETSGHIVCLDKTTTGDGIVAALQVLSIMVKQNKALHELTAGIQLLPQTLVNLKTNNAALLASNPDVIQAVKNLEKHLNGEGRVLLRPSGTEPLLRVMVEGANASIVKQQAQMLCDDISQIDKKMTESLPST</sequence>
<dbReference type="EC" id="5.4.2.10" evidence="1"/>
<dbReference type="EMBL" id="CR628336">
    <property type="protein sequence ID" value="CAH13993.1"/>
    <property type="molecule type" value="Genomic_DNA"/>
</dbReference>
<dbReference type="RefSeq" id="WP_010948482.1">
    <property type="nucleotide sequence ID" value="NC_006368.1"/>
</dbReference>
<dbReference type="SMR" id="Q5X1A3"/>
<dbReference type="GeneID" id="57036792"/>
<dbReference type="KEGG" id="lpp:lpp2840"/>
<dbReference type="LegioList" id="lpp2840"/>
<dbReference type="HOGENOM" id="CLU_016950_7_0_6"/>
<dbReference type="BRENDA" id="5.4.2.10">
    <property type="organism ID" value="2943"/>
</dbReference>
<dbReference type="GO" id="GO:0005829">
    <property type="term" value="C:cytosol"/>
    <property type="evidence" value="ECO:0007669"/>
    <property type="project" value="TreeGrafter"/>
</dbReference>
<dbReference type="GO" id="GO:0000287">
    <property type="term" value="F:magnesium ion binding"/>
    <property type="evidence" value="ECO:0007669"/>
    <property type="project" value="UniProtKB-UniRule"/>
</dbReference>
<dbReference type="GO" id="GO:0008966">
    <property type="term" value="F:phosphoglucosamine mutase activity"/>
    <property type="evidence" value="ECO:0007669"/>
    <property type="project" value="UniProtKB-UniRule"/>
</dbReference>
<dbReference type="GO" id="GO:0004615">
    <property type="term" value="F:phosphomannomutase activity"/>
    <property type="evidence" value="ECO:0007669"/>
    <property type="project" value="TreeGrafter"/>
</dbReference>
<dbReference type="GO" id="GO:0005975">
    <property type="term" value="P:carbohydrate metabolic process"/>
    <property type="evidence" value="ECO:0007669"/>
    <property type="project" value="InterPro"/>
</dbReference>
<dbReference type="GO" id="GO:0009252">
    <property type="term" value="P:peptidoglycan biosynthetic process"/>
    <property type="evidence" value="ECO:0007669"/>
    <property type="project" value="TreeGrafter"/>
</dbReference>
<dbReference type="GO" id="GO:0006048">
    <property type="term" value="P:UDP-N-acetylglucosamine biosynthetic process"/>
    <property type="evidence" value="ECO:0007669"/>
    <property type="project" value="TreeGrafter"/>
</dbReference>
<dbReference type="CDD" id="cd05802">
    <property type="entry name" value="GlmM"/>
    <property type="match status" value="1"/>
</dbReference>
<dbReference type="FunFam" id="3.30.310.50:FF:000001">
    <property type="entry name" value="Phosphoglucosamine mutase"/>
    <property type="match status" value="1"/>
</dbReference>
<dbReference type="FunFam" id="3.40.120.10:FF:000001">
    <property type="entry name" value="Phosphoglucosamine mutase"/>
    <property type="match status" value="1"/>
</dbReference>
<dbReference type="FunFam" id="3.40.120.10:FF:000002">
    <property type="entry name" value="Phosphoglucosamine mutase"/>
    <property type="match status" value="1"/>
</dbReference>
<dbReference type="Gene3D" id="3.40.120.10">
    <property type="entry name" value="Alpha-D-Glucose-1,6-Bisphosphate, subunit A, domain 3"/>
    <property type="match status" value="3"/>
</dbReference>
<dbReference type="Gene3D" id="3.30.310.50">
    <property type="entry name" value="Alpha-D-phosphohexomutase, C-terminal domain"/>
    <property type="match status" value="1"/>
</dbReference>
<dbReference type="HAMAP" id="MF_01554_B">
    <property type="entry name" value="GlmM_B"/>
    <property type="match status" value="1"/>
</dbReference>
<dbReference type="InterPro" id="IPR005844">
    <property type="entry name" value="A-D-PHexomutase_a/b/a-I"/>
</dbReference>
<dbReference type="InterPro" id="IPR016055">
    <property type="entry name" value="A-D-PHexomutase_a/b/a-I/II/III"/>
</dbReference>
<dbReference type="InterPro" id="IPR005845">
    <property type="entry name" value="A-D-PHexomutase_a/b/a-II"/>
</dbReference>
<dbReference type="InterPro" id="IPR005846">
    <property type="entry name" value="A-D-PHexomutase_a/b/a-III"/>
</dbReference>
<dbReference type="InterPro" id="IPR005843">
    <property type="entry name" value="A-D-PHexomutase_C"/>
</dbReference>
<dbReference type="InterPro" id="IPR036900">
    <property type="entry name" value="A-D-PHexomutase_C_sf"/>
</dbReference>
<dbReference type="InterPro" id="IPR005841">
    <property type="entry name" value="Alpha-D-phosphohexomutase_SF"/>
</dbReference>
<dbReference type="InterPro" id="IPR006352">
    <property type="entry name" value="GlmM_bact"/>
</dbReference>
<dbReference type="InterPro" id="IPR050060">
    <property type="entry name" value="Phosphoglucosamine_mutase"/>
</dbReference>
<dbReference type="NCBIfam" id="TIGR01455">
    <property type="entry name" value="glmM"/>
    <property type="match status" value="1"/>
</dbReference>
<dbReference type="NCBIfam" id="NF008139">
    <property type="entry name" value="PRK10887.1"/>
    <property type="match status" value="1"/>
</dbReference>
<dbReference type="PANTHER" id="PTHR42946:SF1">
    <property type="entry name" value="PHOSPHOGLUCOMUTASE (ALPHA-D-GLUCOSE-1,6-BISPHOSPHATE-DEPENDENT)"/>
    <property type="match status" value="1"/>
</dbReference>
<dbReference type="PANTHER" id="PTHR42946">
    <property type="entry name" value="PHOSPHOHEXOSE MUTASE"/>
    <property type="match status" value="1"/>
</dbReference>
<dbReference type="Pfam" id="PF02878">
    <property type="entry name" value="PGM_PMM_I"/>
    <property type="match status" value="1"/>
</dbReference>
<dbReference type="Pfam" id="PF02879">
    <property type="entry name" value="PGM_PMM_II"/>
    <property type="match status" value="1"/>
</dbReference>
<dbReference type="Pfam" id="PF02880">
    <property type="entry name" value="PGM_PMM_III"/>
    <property type="match status" value="1"/>
</dbReference>
<dbReference type="Pfam" id="PF00408">
    <property type="entry name" value="PGM_PMM_IV"/>
    <property type="match status" value="1"/>
</dbReference>
<dbReference type="PRINTS" id="PR00509">
    <property type="entry name" value="PGMPMM"/>
</dbReference>
<dbReference type="SUPFAM" id="SSF55957">
    <property type="entry name" value="Phosphoglucomutase, C-terminal domain"/>
    <property type="match status" value="1"/>
</dbReference>
<dbReference type="SUPFAM" id="SSF53738">
    <property type="entry name" value="Phosphoglucomutase, first 3 domains"/>
    <property type="match status" value="3"/>
</dbReference>
<reference key="1">
    <citation type="journal article" date="2004" name="Nat. Genet.">
        <title>Evidence in the Legionella pneumophila genome for exploitation of host cell functions and high genome plasticity.</title>
        <authorList>
            <person name="Cazalet C."/>
            <person name="Rusniok C."/>
            <person name="Brueggemann H."/>
            <person name="Zidane N."/>
            <person name="Magnier A."/>
            <person name="Ma L."/>
            <person name="Tichit M."/>
            <person name="Jarraud S."/>
            <person name="Bouchier C."/>
            <person name="Vandenesch F."/>
            <person name="Kunst F."/>
            <person name="Etienne J."/>
            <person name="Glaser P."/>
            <person name="Buchrieser C."/>
        </authorList>
    </citation>
    <scope>NUCLEOTIDE SEQUENCE [LARGE SCALE GENOMIC DNA]</scope>
    <source>
        <strain>Paris</strain>
    </source>
</reference>
<organism>
    <name type="scientific">Legionella pneumophila (strain Paris)</name>
    <dbReference type="NCBI Taxonomy" id="297246"/>
    <lineage>
        <taxon>Bacteria</taxon>
        <taxon>Pseudomonadati</taxon>
        <taxon>Pseudomonadota</taxon>
        <taxon>Gammaproteobacteria</taxon>
        <taxon>Legionellales</taxon>
        <taxon>Legionellaceae</taxon>
        <taxon>Legionella</taxon>
    </lineage>
</organism>
<name>GLMM_LEGPA</name>
<gene>
    <name evidence="1" type="primary">glmM</name>
    <name type="ordered locus">lpp2840</name>
</gene>